<dbReference type="EC" id="1.2.1.41" evidence="1"/>
<dbReference type="EMBL" id="D90351">
    <property type="protein sequence ID" value="BAA14365.1"/>
    <property type="molecule type" value="Genomic_DNA"/>
</dbReference>
<dbReference type="EMBL" id="X53086">
    <property type="protein sequence ID" value="CAA37255.1"/>
    <property type="molecule type" value="Genomic_DNA"/>
</dbReference>
<dbReference type="PIR" id="B49753">
    <property type="entry name" value="RDSEEM"/>
</dbReference>
<dbReference type="RefSeq" id="WP_015376739.1">
    <property type="nucleotide sequence ID" value="NZ_WVHW01000007.1"/>
</dbReference>
<dbReference type="SMR" id="P17857"/>
<dbReference type="STRING" id="273526.SMDB11_0225"/>
<dbReference type="GeneID" id="87006165"/>
<dbReference type="UniPathway" id="UPA00098">
    <property type="reaction ID" value="UER00360"/>
</dbReference>
<dbReference type="GO" id="GO:0005737">
    <property type="term" value="C:cytoplasm"/>
    <property type="evidence" value="ECO:0007669"/>
    <property type="project" value="UniProtKB-SubCell"/>
</dbReference>
<dbReference type="GO" id="GO:0004350">
    <property type="term" value="F:glutamate-5-semialdehyde dehydrogenase activity"/>
    <property type="evidence" value="ECO:0007669"/>
    <property type="project" value="UniProtKB-UniRule"/>
</dbReference>
<dbReference type="GO" id="GO:0050661">
    <property type="term" value="F:NADP binding"/>
    <property type="evidence" value="ECO:0007669"/>
    <property type="project" value="InterPro"/>
</dbReference>
<dbReference type="GO" id="GO:0055129">
    <property type="term" value="P:L-proline biosynthetic process"/>
    <property type="evidence" value="ECO:0007669"/>
    <property type="project" value="UniProtKB-UniRule"/>
</dbReference>
<dbReference type="CDD" id="cd07079">
    <property type="entry name" value="ALDH_F18-19_ProA-GPR"/>
    <property type="match status" value="1"/>
</dbReference>
<dbReference type="FunFam" id="3.40.309.10:FF:000006">
    <property type="entry name" value="Gamma-glutamyl phosphate reductase"/>
    <property type="match status" value="1"/>
</dbReference>
<dbReference type="Gene3D" id="3.40.605.10">
    <property type="entry name" value="Aldehyde Dehydrogenase, Chain A, domain 1"/>
    <property type="match status" value="1"/>
</dbReference>
<dbReference type="Gene3D" id="3.40.309.10">
    <property type="entry name" value="Aldehyde Dehydrogenase, Chain A, domain 2"/>
    <property type="match status" value="1"/>
</dbReference>
<dbReference type="HAMAP" id="MF_00412">
    <property type="entry name" value="ProA"/>
    <property type="match status" value="1"/>
</dbReference>
<dbReference type="InterPro" id="IPR016161">
    <property type="entry name" value="Ald_DH/histidinol_DH"/>
</dbReference>
<dbReference type="InterPro" id="IPR016163">
    <property type="entry name" value="Ald_DH_C"/>
</dbReference>
<dbReference type="InterPro" id="IPR016162">
    <property type="entry name" value="Ald_DH_N"/>
</dbReference>
<dbReference type="InterPro" id="IPR015590">
    <property type="entry name" value="Aldehyde_DH_dom"/>
</dbReference>
<dbReference type="InterPro" id="IPR020593">
    <property type="entry name" value="G-glutamylP_reductase_CS"/>
</dbReference>
<dbReference type="InterPro" id="IPR012134">
    <property type="entry name" value="Glu-5-SA_DH"/>
</dbReference>
<dbReference type="InterPro" id="IPR000965">
    <property type="entry name" value="GPR_dom"/>
</dbReference>
<dbReference type="NCBIfam" id="NF001221">
    <property type="entry name" value="PRK00197.1"/>
    <property type="match status" value="1"/>
</dbReference>
<dbReference type="NCBIfam" id="TIGR00407">
    <property type="entry name" value="proA"/>
    <property type="match status" value="1"/>
</dbReference>
<dbReference type="PANTHER" id="PTHR11063:SF8">
    <property type="entry name" value="DELTA-1-PYRROLINE-5-CARBOXYLATE SYNTHASE"/>
    <property type="match status" value="1"/>
</dbReference>
<dbReference type="PANTHER" id="PTHR11063">
    <property type="entry name" value="GLUTAMATE SEMIALDEHYDE DEHYDROGENASE"/>
    <property type="match status" value="1"/>
</dbReference>
<dbReference type="Pfam" id="PF00171">
    <property type="entry name" value="Aldedh"/>
    <property type="match status" value="1"/>
</dbReference>
<dbReference type="PIRSF" id="PIRSF000151">
    <property type="entry name" value="GPR"/>
    <property type="match status" value="1"/>
</dbReference>
<dbReference type="SUPFAM" id="SSF53720">
    <property type="entry name" value="ALDH-like"/>
    <property type="match status" value="1"/>
</dbReference>
<dbReference type="PROSITE" id="PS01223">
    <property type="entry name" value="PROA"/>
    <property type="match status" value="1"/>
</dbReference>
<evidence type="ECO:0000255" key="1">
    <source>
        <dbReference type="HAMAP-Rule" id="MF_00412"/>
    </source>
</evidence>
<feature type="chain" id="PRO_0000189779" description="Gamma-glutamyl phosphate reductase">
    <location>
        <begin position="1"/>
        <end position="417"/>
    </location>
</feature>
<protein>
    <recommendedName>
        <fullName evidence="1">Gamma-glutamyl phosphate reductase</fullName>
        <shortName evidence="1">GPR</shortName>
        <ecNumber evidence="1">1.2.1.41</ecNumber>
    </recommendedName>
    <alternativeName>
        <fullName evidence="1">Glutamate-5-semialdehyde dehydrogenase</fullName>
    </alternativeName>
    <alternativeName>
        <fullName evidence="1">Glutamyl-gamma-semialdehyde dehydrogenase</fullName>
        <shortName evidence="1">GSA dehydrogenase</shortName>
    </alternativeName>
</protein>
<name>PROA_SERMA</name>
<gene>
    <name evidence="1" type="primary">proA</name>
</gene>
<sequence>MLEQMGKAAKQASWQLAVLSTAKKNQVLSVMADRLEANSEAILLANEQDMAQARATGMSEALLDRLLLTPARLAAIANDVRQVCRLNDPVGHVLDGNLLDSGLKLERRRVPLGVIGVIYEARPNVTIDVASLCLKTGNAVILRGGKETHNTNQATVKVIQQALEQCGLPAAAVQAIDSPDRALVNELLRLDRYVDMLIPRGGAGLHKLCREQSTIPVITGGIGVCHTYVDADVDFDKALTVIENAKIQRPSACNSLETLLVNRSIAAEFLPALSAKMAAAGVTLHAAENALPLLQGGPATVVPVNAEDYDDEWLSLDLNVLLVDDIDQAIDHIRTHGTNHSDAILTRSLSSAEHFVRAVDSSAVYVNASTRFTDGGQFGLGAEVAVSTQKLHARGPMGLDALTTYKWIGYGDDLVRS</sequence>
<comment type="function">
    <text evidence="1">Catalyzes the NADPH-dependent reduction of L-glutamate 5-phosphate into L-glutamate 5-semialdehyde and phosphate. The product spontaneously undergoes cyclization to form 1-pyrroline-5-carboxylate.</text>
</comment>
<comment type="catalytic activity">
    <reaction evidence="1">
        <text>L-glutamate 5-semialdehyde + phosphate + NADP(+) = L-glutamyl 5-phosphate + NADPH + H(+)</text>
        <dbReference type="Rhea" id="RHEA:19541"/>
        <dbReference type="ChEBI" id="CHEBI:15378"/>
        <dbReference type="ChEBI" id="CHEBI:43474"/>
        <dbReference type="ChEBI" id="CHEBI:57783"/>
        <dbReference type="ChEBI" id="CHEBI:58066"/>
        <dbReference type="ChEBI" id="CHEBI:58274"/>
        <dbReference type="ChEBI" id="CHEBI:58349"/>
        <dbReference type="EC" id="1.2.1.41"/>
    </reaction>
</comment>
<comment type="pathway">
    <text evidence="1">Amino-acid biosynthesis; L-proline biosynthesis; L-glutamate 5-semialdehyde from L-glutamate: step 2/2.</text>
</comment>
<comment type="subcellular location">
    <subcellularLocation>
        <location evidence="1">Cytoplasm</location>
    </subcellularLocation>
</comment>
<comment type="similarity">
    <text evidence="1">Belongs to the gamma-glutamyl phosphate reductase family.</text>
</comment>
<organism>
    <name type="scientific">Serratia marcescens</name>
    <dbReference type="NCBI Taxonomy" id="615"/>
    <lineage>
        <taxon>Bacteria</taxon>
        <taxon>Pseudomonadati</taxon>
        <taxon>Pseudomonadota</taxon>
        <taxon>Gammaproteobacteria</taxon>
        <taxon>Enterobacterales</taxon>
        <taxon>Yersiniaceae</taxon>
        <taxon>Serratia</taxon>
    </lineage>
</organism>
<proteinExistence type="inferred from homology"/>
<accession>P17857</accession>
<reference key="1">
    <citation type="journal article" date="1991" name="J. Gen. Microbiol.">
        <title>Analysis of the Serratia marcescens proBA operon and feedback control of proline biosynthesis.</title>
        <authorList>
            <person name="Omori K."/>
            <person name="Suzuki S."/>
            <person name="Imai Y."/>
            <person name="Komatsubara S."/>
        </authorList>
    </citation>
    <scope>NUCLEOTIDE SEQUENCE [GENOMIC DNA]</scope>
    <source>
        <strain>Sr41</strain>
    </source>
</reference>
<keyword id="KW-0028">Amino-acid biosynthesis</keyword>
<keyword id="KW-0963">Cytoplasm</keyword>
<keyword id="KW-0521">NADP</keyword>
<keyword id="KW-0560">Oxidoreductase</keyword>
<keyword id="KW-0641">Proline biosynthesis</keyword>